<proteinExistence type="evidence at protein level"/>
<keyword id="KW-0472">Membrane</keyword>
<keyword id="KW-1185">Reference proteome</keyword>
<keyword id="KW-0812">Transmembrane</keyword>
<keyword id="KW-1133">Transmembrane helix</keyword>
<sequence length="131" mass="14400">MAGIKALISLSFGGAIGLMFLMLGCALPIYNQYWPLFVLFFYILSPIPYCIARRLVDDTDAMSNACKELAIFLTTGVVVSAFGLPVVFARAHLIEWGACALVLTGNTVIFATILGFFLVFGSNDDFSWQQW</sequence>
<organism>
    <name type="scientific">Rattus norvegicus</name>
    <name type="common">Rat</name>
    <dbReference type="NCBI Taxonomy" id="10116"/>
    <lineage>
        <taxon>Eukaryota</taxon>
        <taxon>Metazoa</taxon>
        <taxon>Chordata</taxon>
        <taxon>Craniata</taxon>
        <taxon>Vertebrata</taxon>
        <taxon>Euteleostomi</taxon>
        <taxon>Mammalia</taxon>
        <taxon>Eutheria</taxon>
        <taxon>Euarchontoglires</taxon>
        <taxon>Glires</taxon>
        <taxon>Rodentia</taxon>
        <taxon>Myomorpha</taxon>
        <taxon>Muroidea</taxon>
        <taxon>Muridae</taxon>
        <taxon>Murinae</taxon>
        <taxon>Rattus</taxon>
    </lineage>
</organism>
<evidence type="ECO:0000250" key="1"/>
<evidence type="ECO:0000255" key="2"/>
<evidence type="ECO:0000269" key="3">
    <source>
    </source>
</evidence>
<evidence type="ECO:0000305" key="4"/>
<name>LERL1_RAT</name>
<accession>Q6PDU4</accession>
<protein>
    <recommendedName>
        <fullName>Leptin receptor overlapping transcript-like 1</fullName>
    </recommendedName>
    <alternativeName>
        <fullName>Endospanin-2</fullName>
    </alternativeName>
</protein>
<comment type="function">
    <text evidence="1">Negatively regulates growth hormone (GH) receptor cell surface expression in liver. May play a role in liver resistance to GH during periods of reduced nutrient availability (By similarity).</text>
</comment>
<comment type="subunit">
    <text evidence="3">Interacts with RAB13.</text>
</comment>
<comment type="interaction">
    <interactant intactId="EBI-8702651">
        <id>Q6PDU4</id>
    </interactant>
    <interactant intactId="EBI-917332">
        <id>P35286</id>
        <label>Rab13</label>
    </interactant>
    <organismsDiffer>false</organismsDiffer>
    <experiments>3</experiments>
</comment>
<comment type="interaction">
    <interactant intactId="EBI-8702651">
        <id>Q6PDU4</id>
    </interactant>
    <interactant intactId="EBI-1780121">
        <id>P51153</id>
        <label>RAB13</label>
    </interactant>
    <organismsDiffer>true</organismsDiffer>
    <experiments>4</experiments>
</comment>
<comment type="subcellular location">
    <subcellularLocation>
        <location evidence="4">Membrane</location>
        <topology evidence="4">Multi-pass membrane protein</topology>
    </subcellularLocation>
</comment>
<comment type="similarity">
    <text evidence="4">Belongs to the OB-RGRP/VPS55 family.</text>
</comment>
<reference key="1">
    <citation type="journal article" date="2004" name="Nature">
        <title>Genome sequence of the Brown Norway rat yields insights into mammalian evolution.</title>
        <authorList>
            <person name="Gibbs R.A."/>
            <person name="Weinstock G.M."/>
            <person name="Metzker M.L."/>
            <person name="Muzny D.M."/>
            <person name="Sodergren E.J."/>
            <person name="Scherer S."/>
            <person name="Scott G."/>
            <person name="Steffen D."/>
            <person name="Worley K.C."/>
            <person name="Burch P.E."/>
            <person name="Okwuonu G."/>
            <person name="Hines S."/>
            <person name="Lewis L."/>
            <person name="Deramo C."/>
            <person name="Delgado O."/>
            <person name="Dugan-Rocha S."/>
            <person name="Miner G."/>
            <person name="Morgan M."/>
            <person name="Hawes A."/>
            <person name="Gill R."/>
            <person name="Holt R.A."/>
            <person name="Adams M.D."/>
            <person name="Amanatides P.G."/>
            <person name="Baden-Tillson H."/>
            <person name="Barnstead M."/>
            <person name="Chin S."/>
            <person name="Evans C.A."/>
            <person name="Ferriera S."/>
            <person name="Fosler C."/>
            <person name="Glodek A."/>
            <person name="Gu Z."/>
            <person name="Jennings D."/>
            <person name="Kraft C.L."/>
            <person name="Nguyen T."/>
            <person name="Pfannkoch C.M."/>
            <person name="Sitter C."/>
            <person name="Sutton G.G."/>
            <person name="Venter J.C."/>
            <person name="Woodage T."/>
            <person name="Smith D."/>
            <person name="Lee H.-M."/>
            <person name="Gustafson E."/>
            <person name="Cahill P."/>
            <person name="Kana A."/>
            <person name="Doucette-Stamm L."/>
            <person name="Weinstock K."/>
            <person name="Fechtel K."/>
            <person name="Weiss R.B."/>
            <person name="Dunn D.M."/>
            <person name="Green E.D."/>
            <person name="Blakesley R.W."/>
            <person name="Bouffard G.G."/>
            <person name="De Jong P.J."/>
            <person name="Osoegawa K."/>
            <person name="Zhu B."/>
            <person name="Marra M."/>
            <person name="Schein J."/>
            <person name="Bosdet I."/>
            <person name="Fjell C."/>
            <person name="Jones S."/>
            <person name="Krzywinski M."/>
            <person name="Mathewson C."/>
            <person name="Siddiqui A."/>
            <person name="Wye N."/>
            <person name="McPherson J."/>
            <person name="Zhao S."/>
            <person name="Fraser C.M."/>
            <person name="Shetty J."/>
            <person name="Shatsman S."/>
            <person name="Geer K."/>
            <person name="Chen Y."/>
            <person name="Abramzon S."/>
            <person name="Nierman W.C."/>
            <person name="Havlak P.H."/>
            <person name="Chen R."/>
            <person name="Durbin K.J."/>
            <person name="Egan A."/>
            <person name="Ren Y."/>
            <person name="Song X.-Z."/>
            <person name="Li B."/>
            <person name="Liu Y."/>
            <person name="Qin X."/>
            <person name="Cawley S."/>
            <person name="Cooney A.J."/>
            <person name="D'Souza L.M."/>
            <person name="Martin K."/>
            <person name="Wu J.Q."/>
            <person name="Gonzalez-Garay M.L."/>
            <person name="Jackson A.R."/>
            <person name="Kalafus K.J."/>
            <person name="McLeod M.P."/>
            <person name="Milosavljevic A."/>
            <person name="Virk D."/>
            <person name="Volkov A."/>
            <person name="Wheeler D.A."/>
            <person name="Zhang Z."/>
            <person name="Bailey J.A."/>
            <person name="Eichler E.E."/>
            <person name="Tuzun E."/>
            <person name="Birney E."/>
            <person name="Mongin E."/>
            <person name="Ureta-Vidal A."/>
            <person name="Woodwark C."/>
            <person name="Zdobnov E."/>
            <person name="Bork P."/>
            <person name="Suyama M."/>
            <person name="Torrents D."/>
            <person name="Alexandersson M."/>
            <person name="Trask B.J."/>
            <person name="Young J.M."/>
            <person name="Huang H."/>
            <person name="Wang H."/>
            <person name="Xing H."/>
            <person name="Daniels S."/>
            <person name="Gietzen D."/>
            <person name="Schmidt J."/>
            <person name="Stevens K."/>
            <person name="Vitt U."/>
            <person name="Wingrove J."/>
            <person name="Camara F."/>
            <person name="Mar Alba M."/>
            <person name="Abril J.F."/>
            <person name="Guigo R."/>
            <person name="Smit A."/>
            <person name="Dubchak I."/>
            <person name="Rubin E.M."/>
            <person name="Couronne O."/>
            <person name="Poliakov A."/>
            <person name="Huebner N."/>
            <person name="Ganten D."/>
            <person name="Goesele C."/>
            <person name="Hummel O."/>
            <person name="Kreitler T."/>
            <person name="Lee Y.-A."/>
            <person name="Monti J."/>
            <person name="Schulz H."/>
            <person name="Zimdahl H."/>
            <person name="Himmelbauer H."/>
            <person name="Lehrach H."/>
            <person name="Jacob H.J."/>
            <person name="Bromberg S."/>
            <person name="Gullings-Handley J."/>
            <person name="Jensen-Seaman M.I."/>
            <person name="Kwitek A.E."/>
            <person name="Lazar J."/>
            <person name="Pasko D."/>
            <person name="Tonellato P.J."/>
            <person name="Twigger S."/>
            <person name="Ponting C.P."/>
            <person name="Duarte J.M."/>
            <person name="Rice S."/>
            <person name="Goodstadt L."/>
            <person name="Beatson S.A."/>
            <person name="Emes R.D."/>
            <person name="Winter E.E."/>
            <person name="Webber C."/>
            <person name="Brandt P."/>
            <person name="Nyakatura G."/>
            <person name="Adetobi M."/>
            <person name="Chiaromonte F."/>
            <person name="Elnitski L."/>
            <person name="Eswara P."/>
            <person name="Hardison R.C."/>
            <person name="Hou M."/>
            <person name="Kolbe D."/>
            <person name="Makova K."/>
            <person name="Miller W."/>
            <person name="Nekrutenko A."/>
            <person name="Riemer C."/>
            <person name="Schwartz S."/>
            <person name="Taylor J."/>
            <person name="Yang S."/>
            <person name="Zhang Y."/>
            <person name="Lindpaintner K."/>
            <person name="Andrews T.D."/>
            <person name="Caccamo M."/>
            <person name="Clamp M."/>
            <person name="Clarke L."/>
            <person name="Curwen V."/>
            <person name="Durbin R.M."/>
            <person name="Eyras E."/>
            <person name="Searle S.M."/>
            <person name="Cooper G.M."/>
            <person name="Batzoglou S."/>
            <person name="Brudno M."/>
            <person name="Sidow A."/>
            <person name="Stone E.A."/>
            <person name="Payseur B.A."/>
            <person name="Bourque G."/>
            <person name="Lopez-Otin C."/>
            <person name="Puente X.S."/>
            <person name="Chakrabarti K."/>
            <person name="Chatterji S."/>
            <person name="Dewey C."/>
            <person name="Pachter L."/>
            <person name="Bray N."/>
            <person name="Yap V.B."/>
            <person name="Caspi A."/>
            <person name="Tesler G."/>
            <person name="Pevzner P.A."/>
            <person name="Haussler D."/>
            <person name="Roskin K.M."/>
            <person name="Baertsch R."/>
            <person name="Clawson H."/>
            <person name="Furey T.S."/>
            <person name="Hinrichs A.S."/>
            <person name="Karolchik D."/>
            <person name="Kent W.J."/>
            <person name="Rosenbloom K.R."/>
            <person name="Trumbower H."/>
            <person name="Weirauch M."/>
            <person name="Cooper D.N."/>
            <person name="Stenson P.D."/>
            <person name="Ma B."/>
            <person name="Brent M."/>
            <person name="Arumugam M."/>
            <person name="Shteynberg D."/>
            <person name="Copley R.R."/>
            <person name="Taylor M.S."/>
            <person name="Riethman H."/>
            <person name="Mudunuri U."/>
            <person name="Peterson J."/>
            <person name="Guyer M."/>
            <person name="Felsenfeld A."/>
            <person name="Old S."/>
            <person name="Mockrin S."/>
            <person name="Collins F.S."/>
        </authorList>
    </citation>
    <scope>NUCLEOTIDE SEQUENCE [LARGE SCALE GENOMIC DNA]</scope>
    <source>
        <strain>Brown Norway</strain>
    </source>
</reference>
<reference key="2">
    <citation type="submission" date="2005-09" db="EMBL/GenBank/DDBJ databases">
        <authorList>
            <person name="Mural R.J."/>
            <person name="Adams M.D."/>
            <person name="Myers E.W."/>
            <person name="Smith H.O."/>
            <person name="Venter J.C."/>
        </authorList>
    </citation>
    <scope>NUCLEOTIDE SEQUENCE [LARGE SCALE GENOMIC DNA]</scope>
</reference>
<reference key="3">
    <citation type="journal article" date="2004" name="Genome Res.">
        <title>The status, quality, and expansion of the NIH full-length cDNA project: the Mammalian Gene Collection (MGC).</title>
        <authorList>
            <consortium name="The MGC Project Team"/>
        </authorList>
    </citation>
    <scope>NUCLEOTIDE SEQUENCE [LARGE SCALE MRNA]</scope>
    <source>
        <tissue>Pituitary</tissue>
    </source>
</reference>
<reference key="4">
    <citation type="journal article" date="2013" name="FEBS Open Bio">
        <title>Novel interaction of Rab13 and Rab8 with endospanins.</title>
        <authorList>
            <person name="Hirvonen M.J."/>
            <person name="Bueki K.G."/>
            <person name="Sun Y."/>
            <person name="Mulari M.T."/>
            <person name="Haerkoenen P.L."/>
            <person name="Vaeaenaenen K.H."/>
        </authorList>
    </citation>
    <scope>INTERACTION WITH RAB13</scope>
</reference>
<feature type="chain" id="PRO_0000424151" description="Leptin receptor overlapping transcript-like 1">
    <location>
        <begin position="1"/>
        <end position="131"/>
    </location>
</feature>
<feature type="transmembrane region" description="Helical" evidence="2">
    <location>
        <begin position="7"/>
        <end position="27"/>
    </location>
</feature>
<feature type="transmembrane region" description="Helical" evidence="2">
    <location>
        <begin position="32"/>
        <end position="52"/>
    </location>
</feature>
<feature type="transmembrane region" description="Helical" evidence="2">
    <location>
        <begin position="69"/>
        <end position="89"/>
    </location>
</feature>
<feature type="transmembrane region" description="Helical" evidence="2">
    <location>
        <begin position="100"/>
        <end position="120"/>
    </location>
</feature>
<gene>
    <name type="primary">Leprotl1</name>
</gene>
<dbReference type="EMBL" id="AABR06088678">
    <property type="status" value="NOT_ANNOTATED_CDS"/>
    <property type="molecule type" value="Genomic_DNA"/>
</dbReference>
<dbReference type="EMBL" id="CH473970">
    <property type="protein sequence ID" value="EDM09176.1"/>
    <property type="molecule type" value="Genomic_DNA"/>
</dbReference>
<dbReference type="EMBL" id="BC058504">
    <property type="protein sequence ID" value="AAH58504.1"/>
    <property type="molecule type" value="mRNA"/>
</dbReference>
<dbReference type="RefSeq" id="NP_001013206.1">
    <property type="nucleotide sequence ID" value="NM_001013188.3"/>
</dbReference>
<dbReference type="SMR" id="Q6PDU4"/>
<dbReference type="FunCoup" id="Q6PDU4">
    <property type="interactions" value="4210"/>
</dbReference>
<dbReference type="IntAct" id="Q6PDU4">
    <property type="interactions" value="2"/>
</dbReference>
<dbReference type="STRING" id="10116.ENSRNOP00000068610"/>
<dbReference type="PaxDb" id="10116-ENSRNOP00000059797"/>
<dbReference type="Ensembl" id="ENSRNOT00000084858.2">
    <property type="protein sequence ID" value="ENSRNOP00000068610.1"/>
    <property type="gene ID" value="ENSRNOG00000012601.8"/>
</dbReference>
<dbReference type="GeneID" id="361160"/>
<dbReference type="KEGG" id="rno:361160"/>
<dbReference type="UCSC" id="RGD:1307168">
    <property type="organism name" value="rat"/>
</dbReference>
<dbReference type="AGR" id="RGD:1307168"/>
<dbReference type="CTD" id="23484"/>
<dbReference type="RGD" id="1307168">
    <property type="gene designation" value="Leprotl1"/>
</dbReference>
<dbReference type="eggNOG" id="KOG2174">
    <property type="taxonomic scope" value="Eukaryota"/>
</dbReference>
<dbReference type="GeneTree" id="ENSGT00390000006503"/>
<dbReference type="InParanoid" id="Q6PDU4"/>
<dbReference type="OrthoDB" id="4775at9989"/>
<dbReference type="PhylomeDB" id="Q6PDU4"/>
<dbReference type="TreeFam" id="TF313689"/>
<dbReference type="PRO" id="PR:Q6PDU4"/>
<dbReference type="Proteomes" id="UP000002494">
    <property type="component" value="Chromosome 16"/>
</dbReference>
<dbReference type="Proteomes" id="UP000234681">
    <property type="component" value="Chromosome 16"/>
</dbReference>
<dbReference type="Bgee" id="ENSRNOG00000012601">
    <property type="expression patterns" value="Expressed in thymus and 20 other cell types or tissues"/>
</dbReference>
<dbReference type="ExpressionAtlas" id="Q6PDU4">
    <property type="expression patterns" value="baseline and differential"/>
</dbReference>
<dbReference type="GO" id="GO:0005768">
    <property type="term" value="C:endosome"/>
    <property type="evidence" value="ECO:0000318"/>
    <property type="project" value="GO_Central"/>
</dbReference>
<dbReference type="GO" id="GO:0016020">
    <property type="term" value="C:membrane"/>
    <property type="evidence" value="ECO:0007669"/>
    <property type="project" value="UniProtKB-SubCell"/>
</dbReference>
<dbReference type="GO" id="GO:0042802">
    <property type="term" value="F:identical protein binding"/>
    <property type="evidence" value="ECO:0000266"/>
    <property type="project" value="RGD"/>
</dbReference>
<dbReference type="GO" id="GO:0032511">
    <property type="term" value="P:late endosome to vacuole transport via multivesicular body sorting pathway"/>
    <property type="evidence" value="ECO:0000318"/>
    <property type="project" value="GO_Central"/>
</dbReference>
<dbReference type="GO" id="GO:0060400">
    <property type="term" value="P:negative regulation of growth hormone receptor signaling pathway"/>
    <property type="evidence" value="ECO:0000318"/>
    <property type="project" value="GO_Central"/>
</dbReference>
<dbReference type="InterPro" id="IPR007262">
    <property type="entry name" value="Vps55/LEPROT"/>
</dbReference>
<dbReference type="PANTHER" id="PTHR12050:SF4">
    <property type="entry name" value="LEPTIN RECEPTOR OVERLAPPING TRANSCRIPT-LIKE 1"/>
    <property type="match status" value="1"/>
</dbReference>
<dbReference type="PANTHER" id="PTHR12050">
    <property type="entry name" value="LEPTIN RECEPTOR-RELATED"/>
    <property type="match status" value="1"/>
</dbReference>
<dbReference type="Pfam" id="PF04133">
    <property type="entry name" value="Vps55"/>
    <property type="match status" value="1"/>
</dbReference>